<organism>
    <name type="scientific">Cupriavidus necator (strain ATCC 17699 / DSM 428 / KCTC 22496 / NCIMB 10442 / H16 / Stanier 337)</name>
    <name type="common">Ralstonia eutropha</name>
    <dbReference type="NCBI Taxonomy" id="381666"/>
    <lineage>
        <taxon>Bacteria</taxon>
        <taxon>Pseudomonadati</taxon>
        <taxon>Pseudomonadota</taxon>
        <taxon>Betaproteobacteria</taxon>
        <taxon>Burkholderiales</taxon>
        <taxon>Burkholderiaceae</taxon>
        <taxon>Cupriavidus</taxon>
    </lineage>
</organism>
<evidence type="ECO:0000255" key="1">
    <source>
        <dbReference type="HAMAP-Rule" id="MF_01320"/>
    </source>
</evidence>
<evidence type="ECO:0000256" key="2">
    <source>
        <dbReference type="SAM" id="MobiDB-lite"/>
    </source>
</evidence>
<evidence type="ECO:0000305" key="3"/>
<protein>
    <recommendedName>
        <fullName evidence="1">Large ribosomal subunit protein uL2</fullName>
    </recommendedName>
    <alternativeName>
        <fullName evidence="3">50S ribosomal protein L2</fullName>
    </alternativeName>
</protein>
<keyword id="KW-1185">Reference proteome</keyword>
<keyword id="KW-0687">Ribonucleoprotein</keyword>
<keyword id="KW-0689">Ribosomal protein</keyword>
<keyword id="KW-0694">RNA-binding</keyword>
<keyword id="KW-0699">rRNA-binding</keyword>
<feature type="chain" id="PRO_0000309992" description="Large ribosomal subunit protein uL2">
    <location>
        <begin position="1"/>
        <end position="276"/>
    </location>
</feature>
<feature type="region of interest" description="Disordered" evidence="2">
    <location>
        <begin position="38"/>
        <end position="59"/>
    </location>
</feature>
<feature type="region of interest" description="Disordered" evidence="2">
    <location>
        <begin position="225"/>
        <end position="276"/>
    </location>
</feature>
<feature type="compositionally biased region" description="Polar residues" evidence="2">
    <location>
        <begin position="39"/>
        <end position="49"/>
    </location>
</feature>
<feature type="compositionally biased region" description="Basic residues" evidence="2">
    <location>
        <begin position="50"/>
        <end position="59"/>
    </location>
</feature>
<comment type="function">
    <text evidence="1">One of the primary rRNA binding proteins. Required for association of the 30S and 50S subunits to form the 70S ribosome, for tRNA binding and peptide bond formation. It has been suggested to have peptidyltransferase activity; this is somewhat controversial. Makes several contacts with the 16S rRNA in the 70S ribosome.</text>
</comment>
<comment type="subunit">
    <text evidence="1">Part of the 50S ribosomal subunit. Forms a bridge to the 30S subunit in the 70S ribosome.</text>
</comment>
<comment type="similarity">
    <text evidence="1">Belongs to the universal ribosomal protein uL2 family.</text>
</comment>
<accession>Q0K622</accession>
<proteinExistence type="inferred from homology"/>
<dbReference type="EMBL" id="AM260479">
    <property type="protein sequence ID" value="CAJ94549.1"/>
    <property type="molecule type" value="Genomic_DNA"/>
</dbReference>
<dbReference type="RefSeq" id="WP_010812395.1">
    <property type="nucleotide sequence ID" value="NZ_CP039287.1"/>
</dbReference>
<dbReference type="SMR" id="Q0K622"/>
<dbReference type="STRING" id="381666.H16_A3481"/>
<dbReference type="KEGG" id="reh:H16_A3481"/>
<dbReference type="eggNOG" id="COG0090">
    <property type="taxonomic scope" value="Bacteria"/>
</dbReference>
<dbReference type="HOGENOM" id="CLU_036235_2_1_4"/>
<dbReference type="OrthoDB" id="9778722at2"/>
<dbReference type="Proteomes" id="UP000008210">
    <property type="component" value="Chromosome 1"/>
</dbReference>
<dbReference type="GO" id="GO:0015934">
    <property type="term" value="C:large ribosomal subunit"/>
    <property type="evidence" value="ECO:0007669"/>
    <property type="project" value="InterPro"/>
</dbReference>
<dbReference type="GO" id="GO:0019843">
    <property type="term" value="F:rRNA binding"/>
    <property type="evidence" value="ECO:0007669"/>
    <property type="project" value="UniProtKB-UniRule"/>
</dbReference>
<dbReference type="GO" id="GO:0003735">
    <property type="term" value="F:structural constituent of ribosome"/>
    <property type="evidence" value="ECO:0007669"/>
    <property type="project" value="InterPro"/>
</dbReference>
<dbReference type="GO" id="GO:0016740">
    <property type="term" value="F:transferase activity"/>
    <property type="evidence" value="ECO:0007669"/>
    <property type="project" value="InterPro"/>
</dbReference>
<dbReference type="GO" id="GO:0002181">
    <property type="term" value="P:cytoplasmic translation"/>
    <property type="evidence" value="ECO:0007669"/>
    <property type="project" value="TreeGrafter"/>
</dbReference>
<dbReference type="FunFam" id="2.30.30.30:FF:000001">
    <property type="entry name" value="50S ribosomal protein L2"/>
    <property type="match status" value="1"/>
</dbReference>
<dbReference type="FunFam" id="2.40.50.140:FF:000003">
    <property type="entry name" value="50S ribosomal protein L2"/>
    <property type="match status" value="1"/>
</dbReference>
<dbReference type="FunFam" id="4.10.950.10:FF:000001">
    <property type="entry name" value="50S ribosomal protein L2"/>
    <property type="match status" value="1"/>
</dbReference>
<dbReference type="Gene3D" id="2.30.30.30">
    <property type="match status" value="1"/>
</dbReference>
<dbReference type="Gene3D" id="2.40.50.140">
    <property type="entry name" value="Nucleic acid-binding proteins"/>
    <property type="match status" value="1"/>
</dbReference>
<dbReference type="Gene3D" id="4.10.950.10">
    <property type="entry name" value="Ribosomal protein L2, domain 3"/>
    <property type="match status" value="1"/>
</dbReference>
<dbReference type="HAMAP" id="MF_01320_B">
    <property type="entry name" value="Ribosomal_uL2_B"/>
    <property type="match status" value="1"/>
</dbReference>
<dbReference type="InterPro" id="IPR012340">
    <property type="entry name" value="NA-bd_OB-fold"/>
</dbReference>
<dbReference type="InterPro" id="IPR014722">
    <property type="entry name" value="Rib_uL2_dom2"/>
</dbReference>
<dbReference type="InterPro" id="IPR002171">
    <property type="entry name" value="Ribosomal_uL2"/>
</dbReference>
<dbReference type="InterPro" id="IPR005880">
    <property type="entry name" value="Ribosomal_uL2_bac/org-type"/>
</dbReference>
<dbReference type="InterPro" id="IPR022669">
    <property type="entry name" value="Ribosomal_uL2_C"/>
</dbReference>
<dbReference type="InterPro" id="IPR022671">
    <property type="entry name" value="Ribosomal_uL2_CS"/>
</dbReference>
<dbReference type="InterPro" id="IPR014726">
    <property type="entry name" value="Ribosomal_uL2_dom3"/>
</dbReference>
<dbReference type="InterPro" id="IPR022666">
    <property type="entry name" value="Ribosomal_uL2_RNA-bd_dom"/>
</dbReference>
<dbReference type="InterPro" id="IPR008991">
    <property type="entry name" value="Translation_prot_SH3-like_sf"/>
</dbReference>
<dbReference type="NCBIfam" id="TIGR01171">
    <property type="entry name" value="rplB_bact"/>
    <property type="match status" value="1"/>
</dbReference>
<dbReference type="PANTHER" id="PTHR13691:SF5">
    <property type="entry name" value="LARGE RIBOSOMAL SUBUNIT PROTEIN UL2M"/>
    <property type="match status" value="1"/>
</dbReference>
<dbReference type="PANTHER" id="PTHR13691">
    <property type="entry name" value="RIBOSOMAL PROTEIN L2"/>
    <property type="match status" value="1"/>
</dbReference>
<dbReference type="Pfam" id="PF00181">
    <property type="entry name" value="Ribosomal_L2"/>
    <property type="match status" value="1"/>
</dbReference>
<dbReference type="Pfam" id="PF03947">
    <property type="entry name" value="Ribosomal_L2_C"/>
    <property type="match status" value="1"/>
</dbReference>
<dbReference type="PIRSF" id="PIRSF002158">
    <property type="entry name" value="Ribosomal_L2"/>
    <property type="match status" value="1"/>
</dbReference>
<dbReference type="SMART" id="SM01383">
    <property type="entry name" value="Ribosomal_L2"/>
    <property type="match status" value="1"/>
</dbReference>
<dbReference type="SMART" id="SM01382">
    <property type="entry name" value="Ribosomal_L2_C"/>
    <property type="match status" value="1"/>
</dbReference>
<dbReference type="SUPFAM" id="SSF50249">
    <property type="entry name" value="Nucleic acid-binding proteins"/>
    <property type="match status" value="1"/>
</dbReference>
<dbReference type="SUPFAM" id="SSF50104">
    <property type="entry name" value="Translation proteins SH3-like domain"/>
    <property type="match status" value="1"/>
</dbReference>
<dbReference type="PROSITE" id="PS00467">
    <property type="entry name" value="RIBOSOMAL_L2"/>
    <property type="match status" value="1"/>
</dbReference>
<sequence>MALVKTKPTSPGRRSMVKVVNKDLHKGAPHAPLLEKQFQKSGRNNNGHITTRHKGGGHKHHYRVVDFKRNDKDGIPARVERLEYDPNRSANIALVLFADGERRYIIATKGMVAGQPLMNGSEAPIKAGNNLPIRNIPVGTTINNVEMLPGKGSQIARAAGGSAVLLAREGLYAQVRLRSGEVRRVHIECRATIGEVGNEEHSLRVIGKAGATRWRGIRPTVRGVVMNPVDHPHGGGEGKTAAGRDPVSPWGTPAKGYRTRSNKRTDSMIVQKRHKR</sequence>
<name>RL2_CUPNH</name>
<reference key="1">
    <citation type="journal article" date="2006" name="Nat. Biotechnol.">
        <title>Genome sequence of the bioplastic-producing 'Knallgas' bacterium Ralstonia eutropha H16.</title>
        <authorList>
            <person name="Pohlmann A."/>
            <person name="Fricke W.F."/>
            <person name="Reinecke F."/>
            <person name="Kusian B."/>
            <person name="Liesegang H."/>
            <person name="Cramm R."/>
            <person name="Eitinger T."/>
            <person name="Ewering C."/>
            <person name="Poetter M."/>
            <person name="Schwartz E."/>
            <person name="Strittmatter A."/>
            <person name="Voss I."/>
            <person name="Gottschalk G."/>
            <person name="Steinbuechel A."/>
            <person name="Friedrich B."/>
            <person name="Bowien B."/>
        </authorList>
    </citation>
    <scope>NUCLEOTIDE SEQUENCE [LARGE SCALE GENOMIC DNA]</scope>
    <source>
        <strain>ATCC 17699 / DSM 428 / KCTC 22496 / NCIMB 10442 / H16 / Stanier 337</strain>
    </source>
</reference>
<gene>
    <name evidence="1" type="primary">rplB</name>
    <name type="ordered locus">H16_A3481</name>
</gene>